<comment type="function">
    <text evidence="1">Mitochondrial inner membrane calcium uniporter that mediates calcium uptake into mitochondria (By similarity). Constitutes a pore-forming and calcium-conducting subunit (By similarity). Mitochondrial calcium homeostasis plays key roles in cellular physiology and regulates cell bioenergetics, cytoplasmic calcium signals and activation of cell death pathways (By similarity).</text>
</comment>
<comment type="catalytic activity">
    <reaction evidence="1">
        <text>Ca(2+)(in) = Ca(2+)(out)</text>
        <dbReference type="Rhea" id="RHEA:29671"/>
        <dbReference type="ChEBI" id="CHEBI:29108"/>
    </reaction>
</comment>
<comment type="subcellular location">
    <subcellularLocation>
        <location evidence="1">Mitochondrion inner membrane</location>
        <topology evidence="3">Multi-pass membrane protein</topology>
    </subcellularLocation>
</comment>
<comment type="alternative products">
    <event type="alternative splicing"/>
    <isoform>
        <id>Q8VYR0-1</id>
        <name>1</name>
        <sequence type="displayed"/>
    </isoform>
    <text>A number of isoforms are produced. According to EST sequences.</text>
</comment>
<comment type="similarity">
    <text evidence="5">Belongs to the MCU (TC 1.A.77) family.</text>
</comment>
<comment type="sequence caution" evidence="5">
    <conflict type="erroneous initiation">
        <sequence resource="EMBL-CDS" id="AAG50752"/>
    </conflict>
    <text>Truncated N-terminus.</text>
</comment>
<name>MCU2_ARATH</name>
<gene>
    <name evidence="4" type="primary">MCU2</name>
    <name evidence="6" type="ordered locus">At1g57610</name>
    <name evidence="7" type="ORF">T8L23.8</name>
</gene>
<dbReference type="EMBL" id="AC079733">
    <property type="protein sequence ID" value="AAG50752.1"/>
    <property type="status" value="ALT_INIT"/>
    <property type="molecule type" value="Genomic_DNA"/>
</dbReference>
<dbReference type="EMBL" id="CP002684">
    <property type="protein sequence ID" value="AEE33441.1"/>
    <property type="molecule type" value="Genomic_DNA"/>
</dbReference>
<dbReference type="EMBL" id="CP002684">
    <property type="protein sequence ID" value="AEE33442.1"/>
    <property type="molecule type" value="Genomic_DNA"/>
</dbReference>
<dbReference type="EMBL" id="AY070082">
    <property type="protein sequence ID" value="AAL49777.1"/>
    <property type="molecule type" value="mRNA"/>
</dbReference>
<dbReference type="PIR" id="C96610">
    <property type="entry name" value="C96610"/>
</dbReference>
<dbReference type="RefSeq" id="NP_176074.2">
    <molecule id="Q8VYR0-1"/>
    <property type="nucleotide sequence ID" value="NM_104558.4"/>
</dbReference>
<dbReference type="RefSeq" id="NP_974043.1">
    <molecule id="Q8VYR0-1"/>
    <property type="nucleotide sequence ID" value="NM_202314.3"/>
</dbReference>
<dbReference type="SMR" id="Q8VYR0"/>
<dbReference type="FunCoup" id="Q8VYR0">
    <property type="interactions" value="403"/>
</dbReference>
<dbReference type="STRING" id="3702.Q8VYR0"/>
<dbReference type="PaxDb" id="3702-AT1G57610.1"/>
<dbReference type="ProteomicsDB" id="238245">
    <molecule id="Q8VYR0-1"/>
</dbReference>
<dbReference type="EnsemblPlants" id="AT1G57610.1">
    <molecule id="Q8VYR0-1"/>
    <property type="protein sequence ID" value="AT1G57610.1"/>
    <property type="gene ID" value="AT1G57610"/>
</dbReference>
<dbReference type="EnsemblPlants" id="AT1G57610.2">
    <molecule id="Q8VYR0-1"/>
    <property type="protein sequence ID" value="AT1G57610.2"/>
    <property type="gene ID" value="AT1G57610"/>
</dbReference>
<dbReference type="GeneID" id="842137"/>
<dbReference type="Gramene" id="AT1G57610.1">
    <molecule id="Q8VYR0-1"/>
    <property type="protein sequence ID" value="AT1G57610.1"/>
    <property type="gene ID" value="AT1G57610"/>
</dbReference>
<dbReference type="Gramene" id="AT1G57610.2">
    <molecule id="Q8VYR0-1"/>
    <property type="protein sequence ID" value="AT1G57610.2"/>
    <property type="gene ID" value="AT1G57610"/>
</dbReference>
<dbReference type="KEGG" id="ath:AT1G57610"/>
<dbReference type="Araport" id="AT1G57610"/>
<dbReference type="TAIR" id="AT1G57610">
    <property type="gene designation" value="MCU2"/>
</dbReference>
<dbReference type="eggNOG" id="KOG2966">
    <property type="taxonomic scope" value="Eukaryota"/>
</dbReference>
<dbReference type="HOGENOM" id="CLU_066330_1_0_1"/>
<dbReference type="InParanoid" id="Q8VYR0"/>
<dbReference type="OMA" id="MQVGLFF"/>
<dbReference type="OrthoDB" id="278338at2759"/>
<dbReference type="PhylomeDB" id="Q8VYR0"/>
<dbReference type="PRO" id="PR:Q8VYR0"/>
<dbReference type="Proteomes" id="UP000006548">
    <property type="component" value="Chromosome 1"/>
</dbReference>
<dbReference type="ExpressionAtlas" id="Q8VYR0">
    <property type="expression patterns" value="baseline and differential"/>
</dbReference>
<dbReference type="GO" id="GO:0005743">
    <property type="term" value="C:mitochondrial inner membrane"/>
    <property type="evidence" value="ECO:0007669"/>
    <property type="project" value="UniProtKB-SubCell"/>
</dbReference>
<dbReference type="GO" id="GO:0005262">
    <property type="term" value="F:calcium channel activity"/>
    <property type="evidence" value="ECO:0007669"/>
    <property type="project" value="UniProtKB-KW"/>
</dbReference>
<dbReference type="GO" id="GO:0046872">
    <property type="term" value="F:metal ion binding"/>
    <property type="evidence" value="ECO:0007669"/>
    <property type="project" value="UniProtKB-KW"/>
</dbReference>
<dbReference type="GO" id="GO:0036444">
    <property type="term" value="P:calcium import into the mitochondrion"/>
    <property type="evidence" value="ECO:0007669"/>
    <property type="project" value="UniProtKB-ARBA"/>
</dbReference>
<dbReference type="GO" id="GO:0051560">
    <property type="term" value="P:mitochondrial calcium ion homeostasis"/>
    <property type="evidence" value="ECO:0007669"/>
    <property type="project" value="InterPro"/>
</dbReference>
<dbReference type="InterPro" id="IPR006769">
    <property type="entry name" value="MCU_C"/>
</dbReference>
<dbReference type="InterPro" id="IPR039055">
    <property type="entry name" value="MCU_fam"/>
</dbReference>
<dbReference type="PANTHER" id="PTHR13462">
    <property type="entry name" value="CALCIUM UNIPORTER PROTEIN, MITOCHONDRIAL"/>
    <property type="match status" value="1"/>
</dbReference>
<dbReference type="PANTHER" id="PTHR13462:SF10">
    <property type="entry name" value="CALCIUM UNIPORTER PROTEIN, MITOCHONDRIAL"/>
    <property type="match status" value="1"/>
</dbReference>
<dbReference type="Pfam" id="PF04678">
    <property type="entry name" value="MCU"/>
    <property type="match status" value="1"/>
</dbReference>
<accession>Q8VYR0</accession>
<accession>Q9FVU1</accession>
<protein>
    <recommendedName>
        <fullName>Calcium uniporter protein 2, mitochondrial</fullName>
        <shortName evidence="4">AtMCU2</shortName>
    </recommendedName>
</protein>
<proteinExistence type="evidence at transcript level"/>
<organism evidence="8">
    <name type="scientific">Arabidopsis thaliana</name>
    <name type="common">Mouse-ear cress</name>
    <dbReference type="NCBI Taxonomy" id="3702"/>
    <lineage>
        <taxon>Eukaryota</taxon>
        <taxon>Viridiplantae</taxon>
        <taxon>Streptophyta</taxon>
        <taxon>Embryophyta</taxon>
        <taxon>Tracheophyta</taxon>
        <taxon>Spermatophyta</taxon>
        <taxon>Magnoliopsida</taxon>
        <taxon>eudicotyledons</taxon>
        <taxon>Gunneridae</taxon>
        <taxon>Pentapetalae</taxon>
        <taxon>rosids</taxon>
        <taxon>malvids</taxon>
        <taxon>Brassicales</taxon>
        <taxon>Brassicaceae</taxon>
        <taxon>Camelineae</taxon>
        <taxon>Arabidopsis</taxon>
    </lineage>
</organism>
<evidence type="ECO:0000250" key="1">
    <source>
        <dbReference type="UniProtKB" id="F4I111"/>
    </source>
</evidence>
<evidence type="ECO:0000250" key="2">
    <source>
        <dbReference type="UniProtKB" id="Q8NE86"/>
    </source>
</evidence>
<evidence type="ECO:0000255" key="3"/>
<evidence type="ECO:0000303" key="4">
    <source>
    </source>
</evidence>
<evidence type="ECO:0000305" key="5"/>
<evidence type="ECO:0000312" key="6">
    <source>
        <dbReference type="Araport" id="AT1G57610"/>
    </source>
</evidence>
<evidence type="ECO:0000312" key="7">
    <source>
        <dbReference type="EMBL" id="AAG50752.1"/>
    </source>
</evidence>
<evidence type="ECO:0000312" key="8">
    <source>
        <dbReference type="EMBL" id="AAL49777.1"/>
    </source>
</evidence>
<sequence>MWSVMGLVRRTAMSSTVNKASPVRSLLGGFRCLNVESKEEDEKKDMTVLEAKKLMRLVNVEDMKKKLIGMGDKEMVTYTTLIEASQGLGIARSLDEAHAFARVLDDAGVILIFRDKVYLHPHKVVDLIRKAVPLGLNPDDELIREEFDKMRSMKEEIDVLAHQQVRKILWGGLGYSVVQIGIFVRLTFWEFSWDVMEPITFFTTATGIIVGYAYFLMTSRDPTYQDFMKRLFLSRQRKLLKSHKFDAERFKELENKWKITSCSSSSCHANASIRNRVGVDLDLEDSLQSHHRD</sequence>
<feature type="transit peptide" description="Mitochondrion" evidence="3">
    <location>
        <begin position="1"/>
        <end position="33"/>
    </location>
</feature>
<feature type="chain" id="PRO_0000431374" description="Calcium uniporter protein 2, mitochondrial">
    <location>
        <begin position="34"/>
        <end position="293"/>
    </location>
</feature>
<feature type="transmembrane region" description="Helical; Name=1" evidence="3">
    <location>
        <begin position="168"/>
        <end position="188"/>
    </location>
</feature>
<feature type="transmembrane region" description="Helical; Name=2" evidence="3">
    <location>
        <begin position="198"/>
        <end position="218"/>
    </location>
</feature>
<feature type="short sequence motif" description="Selectivity filter" evidence="2">
    <location>
        <begin position="193"/>
        <end position="201"/>
    </location>
</feature>
<feature type="binding site" evidence="2">
    <location>
        <position position="197"/>
    </location>
    <ligand>
        <name>Ca(2+)</name>
        <dbReference type="ChEBI" id="CHEBI:29108"/>
    </ligand>
</feature>
<reference key="1">
    <citation type="journal article" date="2000" name="Nature">
        <title>Sequence and analysis of chromosome 1 of the plant Arabidopsis thaliana.</title>
        <authorList>
            <person name="Theologis A."/>
            <person name="Ecker J.R."/>
            <person name="Palm C.J."/>
            <person name="Federspiel N.A."/>
            <person name="Kaul S."/>
            <person name="White O."/>
            <person name="Alonso J."/>
            <person name="Altafi H."/>
            <person name="Araujo R."/>
            <person name="Bowman C.L."/>
            <person name="Brooks S.Y."/>
            <person name="Buehler E."/>
            <person name="Chan A."/>
            <person name="Chao Q."/>
            <person name="Chen H."/>
            <person name="Cheuk R.F."/>
            <person name="Chin C.W."/>
            <person name="Chung M.K."/>
            <person name="Conn L."/>
            <person name="Conway A.B."/>
            <person name="Conway A.R."/>
            <person name="Creasy T.H."/>
            <person name="Dewar K."/>
            <person name="Dunn P."/>
            <person name="Etgu P."/>
            <person name="Feldblyum T.V."/>
            <person name="Feng J.-D."/>
            <person name="Fong B."/>
            <person name="Fujii C.Y."/>
            <person name="Gill J.E."/>
            <person name="Goldsmith A.D."/>
            <person name="Haas B."/>
            <person name="Hansen N.F."/>
            <person name="Hughes B."/>
            <person name="Huizar L."/>
            <person name="Hunter J.L."/>
            <person name="Jenkins J."/>
            <person name="Johnson-Hopson C."/>
            <person name="Khan S."/>
            <person name="Khaykin E."/>
            <person name="Kim C.J."/>
            <person name="Koo H.L."/>
            <person name="Kremenetskaia I."/>
            <person name="Kurtz D.B."/>
            <person name="Kwan A."/>
            <person name="Lam B."/>
            <person name="Langin-Hooper S."/>
            <person name="Lee A."/>
            <person name="Lee J.M."/>
            <person name="Lenz C.A."/>
            <person name="Li J.H."/>
            <person name="Li Y.-P."/>
            <person name="Lin X."/>
            <person name="Liu S.X."/>
            <person name="Liu Z.A."/>
            <person name="Luros J.S."/>
            <person name="Maiti R."/>
            <person name="Marziali A."/>
            <person name="Militscher J."/>
            <person name="Miranda M."/>
            <person name="Nguyen M."/>
            <person name="Nierman W.C."/>
            <person name="Osborne B.I."/>
            <person name="Pai G."/>
            <person name="Peterson J."/>
            <person name="Pham P.K."/>
            <person name="Rizzo M."/>
            <person name="Rooney T."/>
            <person name="Rowley D."/>
            <person name="Sakano H."/>
            <person name="Salzberg S.L."/>
            <person name="Schwartz J.R."/>
            <person name="Shinn P."/>
            <person name="Southwick A.M."/>
            <person name="Sun H."/>
            <person name="Tallon L.J."/>
            <person name="Tambunga G."/>
            <person name="Toriumi M.J."/>
            <person name="Town C.D."/>
            <person name="Utterback T."/>
            <person name="Van Aken S."/>
            <person name="Vaysberg M."/>
            <person name="Vysotskaia V.S."/>
            <person name="Walker M."/>
            <person name="Wu D."/>
            <person name="Yu G."/>
            <person name="Fraser C.M."/>
            <person name="Venter J.C."/>
            <person name="Davis R.W."/>
        </authorList>
    </citation>
    <scope>NUCLEOTIDE SEQUENCE [LARGE SCALE GENOMIC DNA]</scope>
    <source>
        <strain>cv. Columbia</strain>
    </source>
</reference>
<reference key="2">
    <citation type="journal article" date="2017" name="Plant J.">
        <title>Araport11: a complete reannotation of the Arabidopsis thaliana reference genome.</title>
        <authorList>
            <person name="Cheng C.Y."/>
            <person name="Krishnakumar V."/>
            <person name="Chan A.P."/>
            <person name="Thibaud-Nissen F."/>
            <person name="Schobel S."/>
            <person name="Town C.D."/>
        </authorList>
    </citation>
    <scope>GENOME REANNOTATION</scope>
    <source>
        <strain>cv. Columbia</strain>
    </source>
</reference>
<reference key="3">
    <citation type="journal article" date="2003" name="Science">
        <title>Empirical analysis of transcriptional activity in the Arabidopsis genome.</title>
        <authorList>
            <person name="Yamada K."/>
            <person name="Lim J."/>
            <person name="Dale J.M."/>
            <person name="Chen H."/>
            <person name="Shinn P."/>
            <person name="Palm C.J."/>
            <person name="Southwick A.M."/>
            <person name="Wu H.C."/>
            <person name="Kim C.J."/>
            <person name="Nguyen M."/>
            <person name="Pham P.K."/>
            <person name="Cheuk R.F."/>
            <person name="Karlin-Newmann G."/>
            <person name="Liu S.X."/>
            <person name="Lam B."/>
            <person name="Sakano H."/>
            <person name="Wu T."/>
            <person name="Yu G."/>
            <person name="Miranda M."/>
            <person name="Quach H.L."/>
            <person name="Tripp M."/>
            <person name="Chang C.H."/>
            <person name="Lee J.M."/>
            <person name="Toriumi M.J."/>
            <person name="Chan M.M."/>
            <person name="Tang C.C."/>
            <person name="Onodera C.S."/>
            <person name="Deng J.M."/>
            <person name="Akiyama K."/>
            <person name="Ansari Y."/>
            <person name="Arakawa T."/>
            <person name="Banh J."/>
            <person name="Banno F."/>
            <person name="Bowser L."/>
            <person name="Brooks S.Y."/>
            <person name="Carninci P."/>
            <person name="Chao Q."/>
            <person name="Choy N."/>
            <person name="Enju A."/>
            <person name="Goldsmith A.D."/>
            <person name="Gurjal M."/>
            <person name="Hansen N.F."/>
            <person name="Hayashizaki Y."/>
            <person name="Johnson-Hopson C."/>
            <person name="Hsuan V.W."/>
            <person name="Iida K."/>
            <person name="Karnes M."/>
            <person name="Khan S."/>
            <person name="Koesema E."/>
            <person name="Ishida J."/>
            <person name="Jiang P.X."/>
            <person name="Jones T."/>
            <person name="Kawai J."/>
            <person name="Kamiya A."/>
            <person name="Meyers C."/>
            <person name="Nakajima M."/>
            <person name="Narusaka M."/>
            <person name="Seki M."/>
            <person name="Sakurai T."/>
            <person name="Satou M."/>
            <person name="Tamse R."/>
            <person name="Vaysberg M."/>
            <person name="Wallender E.K."/>
            <person name="Wong C."/>
            <person name="Yamamura Y."/>
            <person name="Yuan S."/>
            <person name="Shinozaki K."/>
            <person name="Davis R.W."/>
            <person name="Theologis A."/>
            <person name="Ecker J.R."/>
        </authorList>
    </citation>
    <scope>NUCLEOTIDE SEQUENCE [LARGE SCALE MRNA]</scope>
    <source>
        <strain>cv. Columbia</strain>
    </source>
</reference>
<reference key="4">
    <citation type="journal article" date="2012" name="J. Exp. Bot.">
        <title>Plant organellar calcium signalling: an emerging field.</title>
        <authorList>
            <person name="Stael S."/>
            <person name="Wurzinger B."/>
            <person name="Mair A."/>
            <person name="Mehlmer N."/>
            <person name="Vothknecht U.C."/>
            <person name="Teige M."/>
        </authorList>
    </citation>
    <scope>GENE FAMILY</scope>
    <scope>REVIEW</scope>
</reference>
<reference key="5">
    <citation type="journal article" date="2017" name="Plant Physiol.">
        <title>Physiological Characterization of a Plant Mitochondrial Calcium Uniporter in Vitro and in Vivo.</title>
        <authorList>
            <person name="Teardo E."/>
            <person name="Carraretto L."/>
            <person name="Wagner S."/>
            <person name="Formentin E."/>
            <person name="Behera S."/>
            <person name="De Bortoli S."/>
            <person name="Larosa V."/>
            <person name="Fuchs P."/>
            <person name="Lo Schiavo F."/>
            <person name="Raffaello A."/>
            <person name="Rizzuto R."/>
            <person name="Costa A."/>
            <person name="Schwarzlaender M."/>
            <person name="Szabo I."/>
        </authorList>
    </citation>
    <scope>NOMENCLATURE</scope>
</reference>
<keyword id="KW-0025">Alternative splicing</keyword>
<keyword id="KW-0106">Calcium</keyword>
<keyword id="KW-0107">Calcium channel</keyword>
<keyword id="KW-0109">Calcium transport</keyword>
<keyword id="KW-0407">Ion channel</keyword>
<keyword id="KW-0406">Ion transport</keyword>
<keyword id="KW-0472">Membrane</keyword>
<keyword id="KW-0479">Metal-binding</keyword>
<keyword id="KW-0496">Mitochondrion</keyword>
<keyword id="KW-0999">Mitochondrion inner membrane</keyword>
<keyword id="KW-1185">Reference proteome</keyword>
<keyword id="KW-0809">Transit peptide</keyword>
<keyword id="KW-0812">Transmembrane</keyword>
<keyword id="KW-1133">Transmembrane helix</keyword>
<keyword id="KW-0813">Transport</keyword>